<keyword id="KW-0002">3D-structure</keyword>
<keyword id="KW-0007">Acetylation</keyword>
<keyword id="KW-0256">Endoplasmic reticulum</keyword>
<keyword id="KW-0472">Membrane</keyword>
<keyword id="KW-1185">Reference proteome</keyword>
<keyword id="KW-0812">Transmembrane</keyword>
<keyword id="KW-1133">Transmembrane helix</keyword>
<sequence>MSASVASVISRFLEEYLSSTPQRLKLLDAYLLYILLTGALQFGYCLLVGTFPFNSFLSGFISCVGSFILAGNGSLRNRSNNVFTLVRCFSSLVTLFYSRSPPREVPRGACIALFCERGN</sequence>
<gene>
    <name evidence="1" type="primary">DAD1</name>
</gene>
<protein>
    <recommendedName>
        <fullName evidence="1">Dolichyl-diphosphooligosaccharide--protein glycosyltransferase subunit DAD1</fullName>
        <shortName evidence="3">Oligosaccharyl transferase subunit DAD1</shortName>
    </recommendedName>
    <alternativeName>
        <fullName>Defender against cell death 1</fullName>
        <shortName>DAD-1</shortName>
    </alternativeName>
</protein>
<comment type="function">
    <text evidence="4">Subunit of the oligosaccharyl transferase (OST) complex that catalyzes the initial transfer of a defined glycan (Glc(3)Man(9)GlcNAc(2) in eukaryotes) from the lipid carrier dolichol-pyrophosphate to an asparagine residue within an Asn-X-Ser/Thr consensus motif in nascent polypeptide chains, the first step in protein N-glycosylation. N-glycosylation occurs cotranslationally and the complex associates with the Sec61 complex at the channel-forming translocon complex that mediates protein translocation across the endoplasmic reticulum (ER). All subunits are required for a maximal enzyme activity.</text>
</comment>
<comment type="pathway">
    <text evidence="1">Protein modification; protein glycosylation.</text>
</comment>
<comment type="subunit">
    <text evidence="4 5 6 7">Component of the oligosaccharyltransferase (OST) complex. OST exists in two different complex forms which contain common core subunits RPN1, RPN2, OST48, OST4, DAD1 and TMEM258, either STT3A or STT3B as catalytic subunits, and form-specific accessory subunits (PubMed:12887896, PubMed:15835887, PubMed:25135935). STT3A complex assembly occurs through the formation of 3 subcomplexes. Subcomplex 1 contains RPN1 and TMEM258, subcomplex 2 contains the STT3A-specific subunits STT3A, DC2/OSTC, and KCP2 as well as the core subunit OST4, and subcomplex 3 contains RPN2, DAD1, and OST48. The STT3A complex can form stable complexes with the Sec61 complex or with both the Sec61 and TRAP complexes (PubMed:29519914).</text>
</comment>
<comment type="subcellular location">
    <subcellularLocation>
        <location evidence="3">Endoplasmic reticulum membrane</location>
        <topology evidence="7">Multi-pass membrane protein</topology>
    </subcellularLocation>
</comment>
<comment type="similarity">
    <text evidence="3">Belongs to the DAD/OST2 family.</text>
</comment>
<name>DAD1_CANLF</name>
<organism>
    <name type="scientific">Canis lupus familiaris</name>
    <name type="common">Dog</name>
    <name type="synonym">Canis familiaris</name>
    <dbReference type="NCBI Taxonomy" id="9615"/>
    <lineage>
        <taxon>Eukaryota</taxon>
        <taxon>Metazoa</taxon>
        <taxon>Chordata</taxon>
        <taxon>Craniata</taxon>
        <taxon>Vertebrata</taxon>
        <taxon>Euteleostomi</taxon>
        <taxon>Mammalia</taxon>
        <taxon>Eutheria</taxon>
        <taxon>Laurasiatheria</taxon>
        <taxon>Carnivora</taxon>
        <taxon>Caniformia</taxon>
        <taxon>Canidae</taxon>
        <taxon>Canis</taxon>
    </lineage>
</organism>
<dbReference type="EMBL" id="AAEX03005601">
    <property type="status" value="NOT_ANNOTATED_CDS"/>
    <property type="molecule type" value="Genomic_DNA"/>
</dbReference>
<dbReference type="PDB" id="6FTG">
    <property type="method" value="EM"/>
    <property type="resolution" value="9.10 A"/>
    <property type="chains" value="6=-"/>
</dbReference>
<dbReference type="PDB" id="6FTI">
    <property type="method" value="EM"/>
    <property type="resolution" value="4.20 A"/>
    <property type="chains" value="6=-"/>
</dbReference>
<dbReference type="PDB" id="6FTJ">
    <property type="method" value="EM"/>
    <property type="resolution" value="4.70 A"/>
    <property type="chains" value="6=-"/>
</dbReference>
<dbReference type="PDBsum" id="6FTG"/>
<dbReference type="PDBsum" id="6FTI"/>
<dbReference type="PDBsum" id="6FTJ"/>
<dbReference type="EMDB" id="EMD-4315"/>
<dbReference type="EMDB" id="EMD-4316"/>
<dbReference type="EMDB" id="EMD-4317"/>
<dbReference type="SMR" id="E2R4X3"/>
<dbReference type="CORUM" id="E2R4X3"/>
<dbReference type="FunCoup" id="E2R4X3">
    <property type="interactions" value="1907"/>
</dbReference>
<dbReference type="STRING" id="9615.ENSCAFP00000016393"/>
<dbReference type="PaxDb" id="9612-ENSCAFP00000016393"/>
<dbReference type="eggNOG" id="KOG1746">
    <property type="taxonomic scope" value="Eukaryota"/>
</dbReference>
<dbReference type="HOGENOM" id="CLU_2060630_0_0_1"/>
<dbReference type="InParanoid" id="E2R4X3"/>
<dbReference type="OrthoDB" id="445566at2759"/>
<dbReference type="TreeFam" id="TF312846"/>
<dbReference type="UniPathway" id="UPA00378"/>
<dbReference type="Proteomes" id="UP000002254">
    <property type="component" value="Unplaced"/>
</dbReference>
<dbReference type="Proteomes" id="UP000694429">
    <property type="component" value="Unplaced"/>
</dbReference>
<dbReference type="Proteomes" id="UP000694542">
    <property type="component" value="Unplaced"/>
</dbReference>
<dbReference type="Proteomes" id="UP000805418">
    <property type="component" value="Unplaced"/>
</dbReference>
<dbReference type="GO" id="GO:0008250">
    <property type="term" value="C:oligosaccharyltransferase complex"/>
    <property type="evidence" value="ECO:0000314"/>
    <property type="project" value="UniProtKB"/>
</dbReference>
<dbReference type="GO" id="GO:0006486">
    <property type="term" value="P:protein glycosylation"/>
    <property type="evidence" value="ECO:0000314"/>
    <property type="project" value="UniProtKB"/>
</dbReference>
<dbReference type="GO" id="GO:0006487">
    <property type="term" value="P:protein N-linked glycosylation"/>
    <property type="evidence" value="ECO:0000318"/>
    <property type="project" value="GO_Central"/>
</dbReference>
<dbReference type="InterPro" id="IPR003038">
    <property type="entry name" value="DAD/Ost2"/>
</dbReference>
<dbReference type="PANTHER" id="PTHR10705">
    <property type="entry name" value="DOLICHYL-DIPHOSPHOOLIGOSACCHARIDE--PROTEIN GLYCOSYLTRANSFERASE SUBUNIT DAD1"/>
    <property type="match status" value="1"/>
</dbReference>
<dbReference type="PANTHER" id="PTHR10705:SF0">
    <property type="entry name" value="DOLICHYL-DIPHOSPHOOLIGOSACCHARIDE--PROTEIN GLYCOSYLTRANSFERASE SUBUNIT DAD1"/>
    <property type="match status" value="1"/>
</dbReference>
<dbReference type="Pfam" id="PF02109">
    <property type="entry name" value="DAD"/>
    <property type="match status" value="1"/>
</dbReference>
<proteinExistence type="evidence at protein level"/>
<accession>E2R4X3</accession>
<reference key="1">
    <citation type="journal article" date="2005" name="Nature">
        <title>Genome sequence, comparative analysis and haplotype structure of the domestic dog.</title>
        <authorList>
            <person name="Lindblad-Toh K."/>
            <person name="Wade C.M."/>
            <person name="Mikkelsen T.S."/>
            <person name="Karlsson E.K."/>
            <person name="Jaffe D.B."/>
            <person name="Kamal M."/>
            <person name="Clamp M."/>
            <person name="Chang J.L."/>
            <person name="Kulbokas E.J. III"/>
            <person name="Zody M.C."/>
            <person name="Mauceli E."/>
            <person name="Xie X."/>
            <person name="Breen M."/>
            <person name="Wayne R.K."/>
            <person name="Ostrander E.A."/>
            <person name="Ponting C.P."/>
            <person name="Galibert F."/>
            <person name="Smith D.R."/>
            <person name="deJong P.J."/>
            <person name="Kirkness E.F."/>
            <person name="Alvarez P."/>
            <person name="Biagi T."/>
            <person name="Brockman W."/>
            <person name="Butler J."/>
            <person name="Chin C.-W."/>
            <person name="Cook A."/>
            <person name="Cuff J."/>
            <person name="Daly M.J."/>
            <person name="DeCaprio D."/>
            <person name="Gnerre S."/>
            <person name="Grabherr M."/>
            <person name="Kellis M."/>
            <person name="Kleber M."/>
            <person name="Bardeleben C."/>
            <person name="Goodstadt L."/>
            <person name="Heger A."/>
            <person name="Hitte C."/>
            <person name="Kim L."/>
            <person name="Koepfli K.-P."/>
            <person name="Parker H.G."/>
            <person name="Pollinger J.P."/>
            <person name="Searle S.M.J."/>
            <person name="Sutter N.B."/>
            <person name="Thomas R."/>
            <person name="Webber C."/>
            <person name="Baldwin J."/>
            <person name="Abebe A."/>
            <person name="Abouelleil A."/>
            <person name="Aftuck L."/>
            <person name="Ait-Zahra M."/>
            <person name="Aldredge T."/>
            <person name="Allen N."/>
            <person name="An P."/>
            <person name="Anderson S."/>
            <person name="Antoine C."/>
            <person name="Arachchi H."/>
            <person name="Aslam A."/>
            <person name="Ayotte L."/>
            <person name="Bachantsang P."/>
            <person name="Barry A."/>
            <person name="Bayul T."/>
            <person name="Benamara M."/>
            <person name="Berlin A."/>
            <person name="Bessette D."/>
            <person name="Blitshteyn B."/>
            <person name="Bloom T."/>
            <person name="Blye J."/>
            <person name="Boguslavskiy L."/>
            <person name="Bonnet C."/>
            <person name="Boukhgalter B."/>
            <person name="Brown A."/>
            <person name="Cahill P."/>
            <person name="Calixte N."/>
            <person name="Camarata J."/>
            <person name="Cheshatsang Y."/>
            <person name="Chu J."/>
            <person name="Citroen M."/>
            <person name="Collymore A."/>
            <person name="Cooke P."/>
            <person name="Dawoe T."/>
            <person name="Daza R."/>
            <person name="Decktor K."/>
            <person name="DeGray S."/>
            <person name="Dhargay N."/>
            <person name="Dooley K."/>
            <person name="Dooley K."/>
            <person name="Dorje P."/>
            <person name="Dorjee K."/>
            <person name="Dorris L."/>
            <person name="Duffey N."/>
            <person name="Dupes A."/>
            <person name="Egbiremolen O."/>
            <person name="Elong R."/>
            <person name="Falk J."/>
            <person name="Farina A."/>
            <person name="Faro S."/>
            <person name="Ferguson D."/>
            <person name="Ferreira P."/>
            <person name="Fisher S."/>
            <person name="FitzGerald M."/>
            <person name="Foley K."/>
            <person name="Foley C."/>
            <person name="Franke A."/>
            <person name="Friedrich D."/>
            <person name="Gage D."/>
            <person name="Garber M."/>
            <person name="Gearin G."/>
            <person name="Giannoukos G."/>
            <person name="Goode T."/>
            <person name="Goyette A."/>
            <person name="Graham J."/>
            <person name="Grandbois E."/>
            <person name="Gyaltsen K."/>
            <person name="Hafez N."/>
            <person name="Hagopian D."/>
            <person name="Hagos B."/>
            <person name="Hall J."/>
            <person name="Healy C."/>
            <person name="Hegarty R."/>
            <person name="Honan T."/>
            <person name="Horn A."/>
            <person name="Houde N."/>
            <person name="Hughes L."/>
            <person name="Hunnicutt L."/>
            <person name="Husby M."/>
            <person name="Jester B."/>
            <person name="Jones C."/>
            <person name="Kamat A."/>
            <person name="Kanga B."/>
            <person name="Kells C."/>
            <person name="Khazanovich D."/>
            <person name="Kieu A.C."/>
            <person name="Kisner P."/>
            <person name="Kumar M."/>
            <person name="Lance K."/>
            <person name="Landers T."/>
            <person name="Lara M."/>
            <person name="Lee W."/>
            <person name="Leger J.-P."/>
            <person name="Lennon N."/>
            <person name="Leuper L."/>
            <person name="LeVine S."/>
            <person name="Liu J."/>
            <person name="Liu X."/>
            <person name="Lokyitsang Y."/>
            <person name="Lokyitsang T."/>
            <person name="Lui A."/>
            <person name="Macdonald J."/>
            <person name="Major J."/>
            <person name="Marabella R."/>
            <person name="Maru K."/>
            <person name="Matthews C."/>
            <person name="McDonough S."/>
            <person name="Mehta T."/>
            <person name="Meldrim J."/>
            <person name="Melnikov A."/>
            <person name="Meneus L."/>
            <person name="Mihalev A."/>
            <person name="Mihova T."/>
            <person name="Miller K."/>
            <person name="Mittelman R."/>
            <person name="Mlenga V."/>
            <person name="Mulrain L."/>
            <person name="Munson G."/>
            <person name="Navidi A."/>
            <person name="Naylor J."/>
            <person name="Nguyen T."/>
            <person name="Nguyen N."/>
            <person name="Nguyen C."/>
            <person name="Nguyen T."/>
            <person name="Nicol R."/>
            <person name="Norbu N."/>
            <person name="Norbu C."/>
            <person name="Novod N."/>
            <person name="Nyima T."/>
            <person name="Olandt P."/>
            <person name="O'Neill B."/>
            <person name="O'Neill K."/>
            <person name="Osman S."/>
            <person name="Oyono L."/>
            <person name="Patti C."/>
            <person name="Perrin D."/>
            <person name="Phunkhang P."/>
            <person name="Pierre F."/>
            <person name="Priest M."/>
            <person name="Rachupka A."/>
            <person name="Raghuraman S."/>
            <person name="Rameau R."/>
            <person name="Ray V."/>
            <person name="Raymond C."/>
            <person name="Rege F."/>
            <person name="Rise C."/>
            <person name="Rogers J."/>
            <person name="Rogov P."/>
            <person name="Sahalie J."/>
            <person name="Settipalli S."/>
            <person name="Sharpe T."/>
            <person name="Shea T."/>
            <person name="Sheehan M."/>
            <person name="Sherpa N."/>
            <person name="Shi J."/>
            <person name="Shih D."/>
            <person name="Sloan J."/>
            <person name="Smith C."/>
            <person name="Sparrow T."/>
            <person name="Stalker J."/>
            <person name="Stange-Thomann N."/>
            <person name="Stavropoulos S."/>
            <person name="Stone C."/>
            <person name="Stone S."/>
            <person name="Sykes S."/>
            <person name="Tchuinga P."/>
            <person name="Tenzing P."/>
            <person name="Tesfaye S."/>
            <person name="Thoulutsang D."/>
            <person name="Thoulutsang Y."/>
            <person name="Topham K."/>
            <person name="Topping I."/>
            <person name="Tsamla T."/>
            <person name="Vassiliev H."/>
            <person name="Venkataraman V."/>
            <person name="Vo A."/>
            <person name="Wangchuk T."/>
            <person name="Wangdi T."/>
            <person name="Weiand M."/>
            <person name="Wilkinson J."/>
            <person name="Wilson A."/>
            <person name="Yadav S."/>
            <person name="Yang S."/>
            <person name="Yang X."/>
            <person name="Young G."/>
            <person name="Yu Q."/>
            <person name="Zainoun J."/>
            <person name="Zembek L."/>
            <person name="Zimmer A."/>
            <person name="Lander E.S."/>
        </authorList>
    </citation>
    <scope>NUCLEOTIDE SEQUENCE [LARGE SCALE GENOMIC DNA]</scope>
    <source>
        <strain>Boxer</strain>
    </source>
</reference>
<reference key="2">
    <citation type="journal article" date="2003" name="Mol. Cell">
        <title>Oligosaccharyltransferase isoforms that contain different catalytic STT3 subunits have distinct enzymatic properties.</title>
        <authorList>
            <person name="Kelleher D.J."/>
            <person name="Karaoglu D."/>
            <person name="Mandon E.C."/>
            <person name="Gilmore R."/>
        </authorList>
    </citation>
    <scope>IDENTIFICATION IN THE OLIGOSACCHARYLTRANSFERASE (OST) COMPLEX</scope>
    <scope>FUNCTION OF THE OLIGOSACCHARYLTRANSFERASE (OST) COMPLEX</scope>
    <scope>SUBCELLULAR LOCATION</scope>
</reference>
<reference key="3">
    <citation type="journal article" date="2005" name="Biochemistry">
        <title>Proteomic analysis of mammalian oligosaccharyltransferase reveals multiple subcomplexes that contain Sec61, TRAP, and two potential new subunits.</title>
        <authorList>
            <person name="Shibatani T."/>
            <person name="David L.L."/>
            <person name="McCormack A.L."/>
            <person name="Frueh K."/>
            <person name="Skach W.R."/>
        </authorList>
    </citation>
    <scope>IDENTIFICATION IN THE OLIGOSACCHARYLTRANSFERASE (OST) COMPLEX</scope>
</reference>
<reference key="4">
    <citation type="journal article" date="2014" name="J. Cell Biol.">
        <title>Oxidoreductase activity is necessary for N-glycosylation of cysteine-proximal acceptor sites in glycoproteins.</title>
        <authorList>
            <person name="Cherepanova N.A."/>
            <person name="Shrimal S."/>
            <person name="Gilmore R."/>
        </authorList>
    </citation>
    <scope>IDENTIFICATION IN THE OLIGOSACCHARYLTRANSFERASE (OST) COMPLEX</scope>
</reference>
<reference key="5">
    <citation type="journal article" date="2018" name="Science">
        <title>Structural basis for coupling protein transport and N-glycosylation at the mammalian endoplasmic reticulum.</title>
        <authorList>
            <person name="Braunger K."/>
            <person name="Pfeffer S."/>
            <person name="Shrimal S."/>
            <person name="Gilmore R."/>
            <person name="Berninghausen O."/>
            <person name="Mandon E.C."/>
            <person name="Becker T."/>
            <person name="Foerster F."/>
            <person name="Beckmann R."/>
        </authorList>
    </citation>
    <scope>STRUCTURE BY ELECTRON MICROSCOPY (4.20 ANGSTROMS)</scope>
</reference>
<feature type="initiator methionine" description="Removed" evidence="1">
    <location>
        <position position="1"/>
    </location>
</feature>
<feature type="chain" id="PRO_0000445976" description="Dolichyl-diphosphooligosaccharide--protein glycosyltransferase subunit DAD1">
    <location>
        <begin position="2"/>
        <end position="119"/>
    </location>
</feature>
<feature type="topological domain" description="Cytoplasmic" evidence="8">
    <location>
        <begin position="2"/>
        <end position="30"/>
    </location>
</feature>
<feature type="transmembrane region" description="Helical" evidence="2">
    <location>
        <begin position="31"/>
        <end position="51"/>
    </location>
</feature>
<feature type="topological domain" description="Lumenal" evidence="8">
    <location>
        <begin position="52"/>
        <end position="54"/>
    </location>
</feature>
<feature type="transmembrane region" description="Helical" evidence="2">
    <location>
        <begin position="55"/>
        <end position="75"/>
    </location>
</feature>
<feature type="topological domain" description="Cytoplasmic" evidence="8">
    <location>
        <begin position="76"/>
        <end position="81"/>
    </location>
</feature>
<feature type="transmembrane region" description="Helical" evidence="2">
    <location>
        <begin position="82"/>
        <end position="98"/>
    </location>
</feature>
<feature type="topological domain" description="Lumenal" evidence="8">
    <location>
        <begin position="99"/>
        <end position="119"/>
    </location>
</feature>
<feature type="modified residue" description="N-acetylserine" evidence="1">
    <location>
        <position position="2"/>
    </location>
</feature>
<evidence type="ECO:0000250" key="1">
    <source>
        <dbReference type="UniProtKB" id="P61803"/>
    </source>
</evidence>
<evidence type="ECO:0000255" key="2"/>
<evidence type="ECO:0000255" key="3">
    <source>
        <dbReference type="RuleBase" id="RU361136"/>
    </source>
</evidence>
<evidence type="ECO:0000269" key="4">
    <source>
    </source>
</evidence>
<evidence type="ECO:0000269" key="5">
    <source>
    </source>
</evidence>
<evidence type="ECO:0000269" key="6">
    <source>
    </source>
</evidence>
<evidence type="ECO:0000269" key="7">
    <source>
    </source>
</evidence>
<evidence type="ECO:0000305" key="8">
    <source>
    </source>
</evidence>